<sequence>MLYYFLKYINDIYHFPALRVIDYLTFRASAAAITALLITLLIGPKLIAYLKQRIIEPIKEEAPPEHRKKKQLPTMGGLLIIFAFELSVFLWAKVDSPHVWLVMVAVLWMGAVGFLDDYLKVVKKVKGGLAAHYKLIGQVLLGLLVGLYAWFDPSMAVLRDTTTVPFFKNLTINYGIFYVPVVIFIITAISNAVNLTDGLDGLAAGTSAIAFIGLAGFAYLAGNAVYATYLNIPFIQGGGEVAIVSMALVMACVGFLWFNSNPAEIIMGDTGSLALGSAMAVIALLIKQELLLPLMAGVFVLETFSVSLQVLYFKYTRKRTGEGKRIFLMAPLHHHFQLKGWAEQKIVIRFWIMAILFFLASLMTLKLR</sequence>
<name>MRAY_CHLCH</name>
<comment type="function">
    <text evidence="1">Catalyzes the initial step of the lipid cycle reactions in the biosynthesis of the cell wall peptidoglycan: transfers peptidoglycan precursor phospho-MurNAc-pentapeptide from UDP-MurNAc-pentapeptide onto the lipid carrier undecaprenyl phosphate, yielding undecaprenyl-pyrophosphoryl-MurNAc-pentapeptide, known as lipid I.</text>
</comment>
<comment type="catalytic activity">
    <reaction evidence="1">
        <text>UDP-N-acetyl-alpha-D-muramoyl-L-alanyl-gamma-D-glutamyl-meso-2,6-diaminopimeloyl-D-alanyl-D-alanine + di-trans,octa-cis-undecaprenyl phosphate = di-trans,octa-cis-undecaprenyl diphospho-N-acetyl-alpha-D-muramoyl-L-alanyl-D-glutamyl-meso-2,6-diaminopimeloyl-D-alanyl-D-alanine + UMP</text>
        <dbReference type="Rhea" id="RHEA:28386"/>
        <dbReference type="ChEBI" id="CHEBI:57865"/>
        <dbReference type="ChEBI" id="CHEBI:60392"/>
        <dbReference type="ChEBI" id="CHEBI:61386"/>
        <dbReference type="ChEBI" id="CHEBI:61387"/>
        <dbReference type="EC" id="2.7.8.13"/>
    </reaction>
</comment>
<comment type="cofactor">
    <cofactor evidence="1">
        <name>Mg(2+)</name>
        <dbReference type="ChEBI" id="CHEBI:18420"/>
    </cofactor>
</comment>
<comment type="pathway">
    <text evidence="1">Cell wall biogenesis; peptidoglycan biosynthesis.</text>
</comment>
<comment type="subcellular location">
    <subcellularLocation>
        <location evidence="1">Cell inner membrane</location>
        <topology evidence="1">Multi-pass membrane protein</topology>
    </subcellularLocation>
</comment>
<comment type="similarity">
    <text evidence="1">Belongs to the glycosyltransferase 4 family. MraY subfamily.</text>
</comment>
<protein>
    <recommendedName>
        <fullName evidence="1">Phospho-N-acetylmuramoyl-pentapeptide-transferase</fullName>
        <ecNumber evidence="1">2.7.8.13</ecNumber>
    </recommendedName>
    <alternativeName>
        <fullName evidence="1">UDP-MurNAc-pentapeptide phosphotransferase</fullName>
    </alternativeName>
</protein>
<keyword id="KW-0131">Cell cycle</keyword>
<keyword id="KW-0132">Cell division</keyword>
<keyword id="KW-0997">Cell inner membrane</keyword>
<keyword id="KW-1003">Cell membrane</keyword>
<keyword id="KW-0133">Cell shape</keyword>
<keyword id="KW-0961">Cell wall biogenesis/degradation</keyword>
<keyword id="KW-0460">Magnesium</keyword>
<keyword id="KW-0472">Membrane</keyword>
<keyword id="KW-0479">Metal-binding</keyword>
<keyword id="KW-0573">Peptidoglycan synthesis</keyword>
<keyword id="KW-0808">Transferase</keyword>
<keyword id="KW-0812">Transmembrane</keyword>
<keyword id="KW-1133">Transmembrane helix</keyword>
<evidence type="ECO:0000255" key="1">
    <source>
        <dbReference type="HAMAP-Rule" id="MF_00038"/>
    </source>
</evidence>
<proteinExistence type="inferred from homology"/>
<gene>
    <name evidence="1" type="primary">mraY</name>
    <name type="ordered locus">Cag_0052</name>
</gene>
<organism>
    <name type="scientific">Chlorobium chlorochromatii (strain CaD3)</name>
    <dbReference type="NCBI Taxonomy" id="340177"/>
    <lineage>
        <taxon>Bacteria</taxon>
        <taxon>Pseudomonadati</taxon>
        <taxon>Chlorobiota</taxon>
        <taxon>Chlorobiia</taxon>
        <taxon>Chlorobiales</taxon>
        <taxon>Chlorobiaceae</taxon>
        <taxon>Chlorobium/Pelodictyon group</taxon>
        <taxon>Chlorobium</taxon>
    </lineage>
</organism>
<dbReference type="EC" id="2.7.8.13" evidence="1"/>
<dbReference type="EMBL" id="CP000108">
    <property type="protein sequence ID" value="ABB27331.1"/>
    <property type="molecule type" value="Genomic_DNA"/>
</dbReference>
<dbReference type="SMR" id="Q3ANV6"/>
<dbReference type="STRING" id="340177.Cag_0052"/>
<dbReference type="KEGG" id="cch:Cag_0052"/>
<dbReference type="eggNOG" id="COG0472">
    <property type="taxonomic scope" value="Bacteria"/>
</dbReference>
<dbReference type="HOGENOM" id="CLU_023982_0_0_10"/>
<dbReference type="OrthoDB" id="9805475at2"/>
<dbReference type="UniPathway" id="UPA00219"/>
<dbReference type="GO" id="GO:0005886">
    <property type="term" value="C:plasma membrane"/>
    <property type="evidence" value="ECO:0007669"/>
    <property type="project" value="UniProtKB-SubCell"/>
</dbReference>
<dbReference type="GO" id="GO:0046872">
    <property type="term" value="F:metal ion binding"/>
    <property type="evidence" value="ECO:0007669"/>
    <property type="project" value="UniProtKB-KW"/>
</dbReference>
<dbReference type="GO" id="GO:0008963">
    <property type="term" value="F:phospho-N-acetylmuramoyl-pentapeptide-transferase activity"/>
    <property type="evidence" value="ECO:0007669"/>
    <property type="project" value="UniProtKB-UniRule"/>
</dbReference>
<dbReference type="GO" id="GO:0051992">
    <property type="term" value="F:UDP-N-acetylmuramoyl-L-alanyl-D-glutamyl-meso-2,6-diaminopimelyl-D-alanyl-D-alanine:undecaprenyl-phosphate transferase activity"/>
    <property type="evidence" value="ECO:0007669"/>
    <property type="project" value="RHEA"/>
</dbReference>
<dbReference type="GO" id="GO:0051301">
    <property type="term" value="P:cell division"/>
    <property type="evidence" value="ECO:0007669"/>
    <property type="project" value="UniProtKB-KW"/>
</dbReference>
<dbReference type="GO" id="GO:0071555">
    <property type="term" value="P:cell wall organization"/>
    <property type="evidence" value="ECO:0007669"/>
    <property type="project" value="UniProtKB-KW"/>
</dbReference>
<dbReference type="GO" id="GO:0009252">
    <property type="term" value="P:peptidoglycan biosynthetic process"/>
    <property type="evidence" value="ECO:0007669"/>
    <property type="project" value="UniProtKB-UniRule"/>
</dbReference>
<dbReference type="GO" id="GO:0008360">
    <property type="term" value="P:regulation of cell shape"/>
    <property type="evidence" value="ECO:0007669"/>
    <property type="project" value="UniProtKB-KW"/>
</dbReference>
<dbReference type="CDD" id="cd06852">
    <property type="entry name" value="GT_MraY"/>
    <property type="match status" value="1"/>
</dbReference>
<dbReference type="HAMAP" id="MF_00038">
    <property type="entry name" value="MraY"/>
    <property type="match status" value="1"/>
</dbReference>
<dbReference type="InterPro" id="IPR000715">
    <property type="entry name" value="Glycosyl_transferase_4"/>
</dbReference>
<dbReference type="InterPro" id="IPR003524">
    <property type="entry name" value="PNAcMuramoyl-5peptid_Trfase"/>
</dbReference>
<dbReference type="InterPro" id="IPR018480">
    <property type="entry name" value="PNAcMuramoyl-5peptid_Trfase_CS"/>
</dbReference>
<dbReference type="NCBIfam" id="TIGR00445">
    <property type="entry name" value="mraY"/>
    <property type="match status" value="1"/>
</dbReference>
<dbReference type="PANTHER" id="PTHR22926">
    <property type="entry name" value="PHOSPHO-N-ACETYLMURAMOYL-PENTAPEPTIDE-TRANSFERASE"/>
    <property type="match status" value="1"/>
</dbReference>
<dbReference type="PANTHER" id="PTHR22926:SF5">
    <property type="entry name" value="PHOSPHO-N-ACETYLMURAMOYL-PENTAPEPTIDE-TRANSFERASE HOMOLOG"/>
    <property type="match status" value="1"/>
</dbReference>
<dbReference type="Pfam" id="PF00953">
    <property type="entry name" value="Glycos_transf_4"/>
    <property type="match status" value="1"/>
</dbReference>
<dbReference type="PROSITE" id="PS01348">
    <property type="entry name" value="MRAY_2"/>
    <property type="match status" value="1"/>
</dbReference>
<feature type="chain" id="PRO_0000235447" description="Phospho-N-acetylmuramoyl-pentapeptide-transferase">
    <location>
        <begin position="1"/>
        <end position="368"/>
    </location>
</feature>
<feature type="transmembrane region" description="Helical" evidence="1">
    <location>
        <begin position="30"/>
        <end position="50"/>
    </location>
</feature>
<feature type="transmembrane region" description="Helical" evidence="1">
    <location>
        <begin position="72"/>
        <end position="92"/>
    </location>
</feature>
<feature type="transmembrane region" description="Helical" evidence="1">
    <location>
        <begin position="99"/>
        <end position="119"/>
    </location>
</feature>
<feature type="transmembrane region" description="Helical" evidence="1">
    <location>
        <begin position="135"/>
        <end position="155"/>
    </location>
</feature>
<feature type="transmembrane region" description="Helical" evidence="1">
    <location>
        <begin position="170"/>
        <end position="190"/>
    </location>
</feature>
<feature type="transmembrane region" description="Helical" evidence="1">
    <location>
        <begin position="201"/>
        <end position="221"/>
    </location>
</feature>
<feature type="transmembrane region" description="Helical" evidence="1">
    <location>
        <begin position="238"/>
        <end position="258"/>
    </location>
</feature>
<feature type="transmembrane region" description="Helical" evidence="1">
    <location>
        <begin position="265"/>
        <end position="286"/>
    </location>
</feature>
<feature type="transmembrane region" description="Helical" evidence="1">
    <location>
        <begin position="345"/>
        <end position="365"/>
    </location>
</feature>
<reference key="1">
    <citation type="submission" date="2005-08" db="EMBL/GenBank/DDBJ databases">
        <title>Complete sequence of Chlorobium chlorochromatii CaD3.</title>
        <authorList>
            <consortium name="US DOE Joint Genome Institute"/>
            <person name="Copeland A."/>
            <person name="Lucas S."/>
            <person name="Lapidus A."/>
            <person name="Barry K."/>
            <person name="Detter J.C."/>
            <person name="Glavina T."/>
            <person name="Hammon N."/>
            <person name="Israni S."/>
            <person name="Pitluck S."/>
            <person name="Bryant D."/>
            <person name="Schmutz J."/>
            <person name="Larimer F."/>
            <person name="Land M."/>
            <person name="Kyrpides N."/>
            <person name="Ivanova N."/>
            <person name="Richardson P."/>
        </authorList>
    </citation>
    <scope>NUCLEOTIDE SEQUENCE [LARGE SCALE GENOMIC DNA]</scope>
    <source>
        <strain>CaD3</strain>
    </source>
</reference>
<accession>Q3ANV6</accession>